<comment type="function">
    <text evidence="1">Allows the formation of correctly charged Asn-tRNA(Asn) or Gln-tRNA(Gln) through the transamidation of misacylated Asp-tRNA(Asn) or Glu-tRNA(Gln) in organisms which lack either or both of asparaginyl-tRNA or glutaminyl-tRNA synthetases. The reaction takes place in the presence of glutamine and ATP through an activated phospho-Asp-tRNA(Asn) or phospho-Glu-tRNA(Gln).</text>
</comment>
<comment type="catalytic activity">
    <reaction evidence="1">
        <text>L-glutamyl-tRNA(Gln) + L-glutamine + ATP + H2O = L-glutaminyl-tRNA(Gln) + L-glutamate + ADP + phosphate + H(+)</text>
        <dbReference type="Rhea" id="RHEA:17521"/>
        <dbReference type="Rhea" id="RHEA-COMP:9681"/>
        <dbReference type="Rhea" id="RHEA-COMP:9684"/>
        <dbReference type="ChEBI" id="CHEBI:15377"/>
        <dbReference type="ChEBI" id="CHEBI:15378"/>
        <dbReference type="ChEBI" id="CHEBI:29985"/>
        <dbReference type="ChEBI" id="CHEBI:30616"/>
        <dbReference type="ChEBI" id="CHEBI:43474"/>
        <dbReference type="ChEBI" id="CHEBI:58359"/>
        <dbReference type="ChEBI" id="CHEBI:78520"/>
        <dbReference type="ChEBI" id="CHEBI:78521"/>
        <dbReference type="ChEBI" id="CHEBI:456216"/>
    </reaction>
</comment>
<comment type="catalytic activity">
    <reaction evidence="1">
        <text>L-aspartyl-tRNA(Asn) + L-glutamine + ATP + H2O = L-asparaginyl-tRNA(Asn) + L-glutamate + ADP + phosphate + 2 H(+)</text>
        <dbReference type="Rhea" id="RHEA:14513"/>
        <dbReference type="Rhea" id="RHEA-COMP:9674"/>
        <dbReference type="Rhea" id="RHEA-COMP:9677"/>
        <dbReference type="ChEBI" id="CHEBI:15377"/>
        <dbReference type="ChEBI" id="CHEBI:15378"/>
        <dbReference type="ChEBI" id="CHEBI:29985"/>
        <dbReference type="ChEBI" id="CHEBI:30616"/>
        <dbReference type="ChEBI" id="CHEBI:43474"/>
        <dbReference type="ChEBI" id="CHEBI:58359"/>
        <dbReference type="ChEBI" id="CHEBI:78515"/>
        <dbReference type="ChEBI" id="CHEBI:78516"/>
        <dbReference type="ChEBI" id="CHEBI:456216"/>
    </reaction>
</comment>
<comment type="subunit">
    <text evidence="1">Heterotrimer of A, B and C subunits.</text>
</comment>
<comment type="similarity">
    <text evidence="1">Belongs to the GatB/GatE family. GatB subfamily.</text>
</comment>
<evidence type="ECO:0000255" key="1">
    <source>
        <dbReference type="HAMAP-Rule" id="MF_00121"/>
    </source>
</evidence>
<keyword id="KW-0067">ATP-binding</keyword>
<keyword id="KW-0436">Ligase</keyword>
<keyword id="KW-0547">Nucleotide-binding</keyword>
<keyword id="KW-0648">Protein biosynthesis</keyword>
<sequence>MNNLESWEAVIGLETHVQLNTKSKIFTSASTAFGDAPNTHIDPVVCGLPGTLPVLNETVLEYAVKTSLALNLNVAEHCKFDRKQYFYPDLPKNYQISQFDEPLAENGWLEVEIIEKDKEPYIKKIGIERLHMEEDAGKLVHSGSDRLAGSKYSLVDYNRAGIALCEIVSKPDIRSGKEASEYASEIRRTVRYLGVSDGNMQEGSLRCDVNISVRKGPNAPFGTKVEIKNMNSFSAIQKACDYEIARQIEVYENGGKIFQETRLWDEAKQLTKSMRLKEGSSDYRYFPDPDLGPIEITKAQQEIWFKELPELPSKKRYKYVSQFGLSAYDARVISDEISMANFFEETVANGAEAKLASNWVTSDIVGYLKSNKLSFSELKLSPENLAEMINMISKNIISGKIAKEILPELIQKNISPKKLVEEKGLAMISDSSSISPIIDELINEHPNEVQAFKNGKTKLLGFFVGQLMKRTKGKADPKLANKLLMEKLNS</sequence>
<name>GATB_PROMS</name>
<dbReference type="EC" id="6.3.5.-" evidence="1"/>
<dbReference type="EMBL" id="CP000551">
    <property type="protein sequence ID" value="ABM69337.1"/>
    <property type="molecule type" value="Genomic_DNA"/>
</dbReference>
<dbReference type="RefSeq" id="WP_011817527.1">
    <property type="nucleotide sequence ID" value="NC_008816.1"/>
</dbReference>
<dbReference type="SMR" id="A2BNH6"/>
<dbReference type="STRING" id="146891.A9601_00491"/>
<dbReference type="KEGG" id="pmb:A9601_00491"/>
<dbReference type="eggNOG" id="COG0064">
    <property type="taxonomic scope" value="Bacteria"/>
</dbReference>
<dbReference type="HOGENOM" id="CLU_019240_0_0_3"/>
<dbReference type="OrthoDB" id="9804078at2"/>
<dbReference type="Proteomes" id="UP000002590">
    <property type="component" value="Chromosome"/>
</dbReference>
<dbReference type="GO" id="GO:0050566">
    <property type="term" value="F:asparaginyl-tRNA synthase (glutamine-hydrolyzing) activity"/>
    <property type="evidence" value="ECO:0007669"/>
    <property type="project" value="RHEA"/>
</dbReference>
<dbReference type="GO" id="GO:0005524">
    <property type="term" value="F:ATP binding"/>
    <property type="evidence" value="ECO:0007669"/>
    <property type="project" value="UniProtKB-KW"/>
</dbReference>
<dbReference type="GO" id="GO:0050567">
    <property type="term" value="F:glutaminyl-tRNA synthase (glutamine-hydrolyzing) activity"/>
    <property type="evidence" value="ECO:0007669"/>
    <property type="project" value="UniProtKB-UniRule"/>
</dbReference>
<dbReference type="GO" id="GO:0070681">
    <property type="term" value="P:glutaminyl-tRNAGln biosynthesis via transamidation"/>
    <property type="evidence" value="ECO:0007669"/>
    <property type="project" value="TreeGrafter"/>
</dbReference>
<dbReference type="GO" id="GO:0006412">
    <property type="term" value="P:translation"/>
    <property type="evidence" value="ECO:0007669"/>
    <property type="project" value="UniProtKB-UniRule"/>
</dbReference>
<dbReference type="FunFam" id="1.10.10.410:FF:000001">
    <property type="entry name" value="Aspartyl/glutamyl-tRNA(Asn/Gln) amidotransferase subunit B"/>
    <property type="match status" value="1"/>
</dbReference>
<dbReference type="FunFam" id="1.10.150.380:FF:000001">
    <property type="entry name" value="Aspartyl/glutamyl-tRNA(Asn/Gln) amidotransferase subunit B"/>
    <property type="match status" value="1"/>
</dbReference>
<dbReference type="Gene3D" id="1.10.10.410">
    <property type="match status" value="1"/>
</dbReference>
<dbReference type="Gene3D" id="1.10.150.380">
    <property type="entry name" value="GatB domain, N-terminal subdomain"/>
    <property type="match status" value="1"/>
</dbReference>
<dbReference type="HAMAP" id="MF_00121">
    <property type="entry name" value="GatB"/>
    <property type="match status" value="1"/>
</dbReference>
<dbReference type="InterPro" id="IPR017959">
    <property type="entry name" value="Asn/Gln-tRNA_amidoTrfase_suB/E"/>
</dbReference>
<dbReference type="InterPro" id="IPR006075">
    <property type="entry name" value="Asn/Gln-tRNA_Trfase_suB/E_cat"/>
</dbReference>
<dbReference type="InterPro" id="IPR018027">
    <property type="entry name" value="Asn/Gln_amidotransferase"/>
</dbReference>
<dbReference type="InterPro" id="IPR003789">
    <property type="entry name" value="Asn/Gln_tRNA_amidoTrase-B-like"/>
</dbReference>
<dbReference type="InterPro" id="IPR004413">
    <property type="entry name" value="GatB"/>
</dbReference>
<dbReference type="InterPro" id="IPR042114">
    <property type="entry name" value="GatB_C_1"/>
</dbReference>
<dbReference type="InterPro" id="IPR023168">
    <property type="entry name" value="GatB_Yqey_C_2"/>
</dbReference>
<dbReference type="InterPro" id="IPR017958">
    <property type="entry name" value="Gln-tRNA_amidoTrfase_suB_CS"/>
</dbReference>
<dbReference type="InterPro" id="IPR014746">
    <property type="entry name" value="Gln_synth/guanido_kin_cat_dom"/>
</dbReference>
<dbReference type="NCBIfam" id="TIGR00133">
    <property type="entry name" value="gatB"/>
    <property type="match status" value="1"/>
</dbReference>
<dbReference type="NCBIfam" id="NF004012">
    <property type="entry name" value="PRK05477.1-2"/>
    <property type="match status" value="1"/>
</dbReference>
<dbReference type="NCBIfam" id="NF004014">
    <property type="entry name" value="PRK05477.1-4"/>
    <property type="match status" value="1"/>
</dbReference>
<dbReference type="PANTHER" id="PTHR11659">
    <property type="entry name" value="GLUTAMYL-TRNA GLN AMIDOTRANSFERASE SUBUNIT B MITOCHONDRIAL AND PROKARYOTIC PET112-RELATED"/>
    <property type="match status" value="1"/>
</dbReference>
<dbReference type="PANTHER" id="PTHR11659:SF0">
    <property type="entry name" value="GLUTAMYL-TRNA(GLN) AMIDOTRANSFERASE SUBUNIT B, MITOCHONDRIAL"/>
    <property type="match status" value="1"/>
</dbReference>
<dbReference type="Pfam" id="PF02934">
    <property type="entry name" value="GatB_N"/>
    <property type="match status" value="1"/>
</dbReference>
<dbReference type="Pfam" id="PF02637">
    <property type="entry name" value="GatB_Yqey"/>
    <property type="match status" value="1"/>
</dbReference>
<dbReference type="SMART" id="SM00845">
    <property type="entry name" value="GatB_Yqey"/>
    <property type="match status" value="1"/>
</dbReference>
<dbReference type="SUPFAM" id="SSF89095">
    <property type="entry name" value="GatB/YqeY motif"/>
    <property type="match status" value="1"/>
</dbReference>
<dbReference type="SUPFAM" id="SSF55931">
    <property type="entry name" value="Glutamine synthetase/guanido kinase"/>
    <property type="match status" value="1"/>
</dbReference>
<dbReference type="PROSITE" id="PS01234">
    <property type="entry name" value="GATB"/>
    <property type="match status" value="1"/>
</dbReference>
<feature type="chain" id="PRO_1000016019" description="Aspartyl/glutamyl-tRNA(Asn/Gln) amidotransferase subunit B">
    <location>
        <begin position="1"/>
        <end position="490"/>
    </location>
</feature>
<proteinExistence type="inferred from homology"/>
<reference key="1">
    <citation type="journal article" date="2007" name="PLoS Genet.">
        <title>Patterns and implications of gene gain and loss in the evolution of Prochlorococcus.</title>
        <authorList>
            <person name="Kettler G.C."/>
            <person name="Martiny A.C."/>
            <person name="Huang K."/>
            <person name="Zucker J."/>
            <person name="Coleman M.L."/>
            <person name="Rodrigue S."/>
            <person name="Chen F."/>
            <person name="Lapidus A."/>
            <person name="Ferriera S."/>
            <person name="Johnson J."/>
            <person name="Steglich C."/>
            <person name="Church G.M."/>
            <person name="Richardson P."/>
            <person name="Chisholm S.W."/>
        </authorList>
    </citation>
    <scope>NUCLEOTIDE SEQUENCE [LARGE SCALE GENOMIC DNA]</scope>
    <source>
        <strain>AS9601</strain>
    </source>
</reference>
<gene>
    <name evidence="1" type="primary">gatB</name>
    <name type="ordered locus">A9601_00491</name>
</gene>
<organism>
    <name type="scientific">Prochlorococcus marinus (strain AS9601)</name>
    <dbReference type="NCBI Taxonomy" id="146891"/>
    <lineage>
        <taxon>Bacteria</taxon>
        <taxon>Bacillati</taxon>
        <taxon>Cyanobacteriota</taxon>
        <taxon>Cyanophyceae</taxon>
        <taxon>Synechococcales</taxon>
        <taxon>Prochlorococcaceae</taxon>
        <taxon>Prochlorococcus</taxon>
    </lineage>
</organism>
<accession>A2BNH6</accession>
<protein>
    <recommendedName>
        <fullName evidence="1">Aspartyl/glutamyl-tRNA(Asn/Gln) amidotransferase subunit B</fullName>
        <shortName evidence="1">Asp/Glu-ADT subunit B</shortName>
        <ecNumber evidence="1">6.3.5.-</ecNumber>
    </recommendedName>
</protein>